<evidence type="ECO:0000255" key="1">
    <source>
        <dbReference type="PROSITE-ProRule" id="PRU00434"/>
    </source>
</evidence>
<evidence type="ECO:0000256" key="2">
    <source>
        <dbReference type="SAM" id="MobiDB-lite"/>
    </source>
</evidence>
<evidence type="ECO:0000303" key="3">
    <source>
    </source>
</evidence>
<evidence type="ECO:0000305" key="4"/>
<sequence length="642" mass="73482">MMILQVNQLSKSFGADTILNNIKLEVRNRDRIAIVGRNGAGKSTLLKIIAGQLSYEKGEIIKPKDITMGYLAQHTGLDSKLTIKEELLTVFDHLKAMEKEMRAMEEKMAAADPGELESIMKTYDRLQQEFKDKGGYQYEADVRSVLHGLGFSHFDDSTQVQSLSGGQKTRLALGKLLLTQPDLLILDEPTNHLDIDTLTWLEHYLQGYSGAILIVSHDRYFLDKVVNQVYEVSRAESKKYHGNYSAYLDQKAAQYEKDLKMYEKQQDEIAKLQDFVDRNLARASTTKRAQSRRKQLERMDVMSKPLGDEKSANFHFDITKQSGNEVLRVQDLTISYENQPPLLTEVSFMLTRGESAALVGPNGIGKSTLLKTLIDTLKPDQGTISYGSNVSVGYYDQEQAELTSSKRVLDELWDEYPGLPEKEIRTCLGNFLFSGDDVLKPVHSLSGGEKARLALAKLMLQKANFLILDEPTNHLDLDSKEVLENALIDYPGTLLFVSHDRYFINRIATRVLELSSSHIEEYLGDYDYYTEKKTEQLELEKMNQQEETDKTPATVKSDSKRSYEEEKEWKKKERQRLRRIEEIETTVQTIEENISRNDELLCDPEVYQDHEKVQAIHADNEKLNQELESLLSEWEELSTEED</sequence>
<proteinExistence type="inferred from homology"/>
<dbReference type="EMBL" id="D88802">
    <property type="protein sequence ID" value="BAA19719.1"/>
    <property type="molecule type" value="Genomic_DNA"/>
</dbReference>
<dbReference type="EMBL" id="AL009126">
    <property type="protein sequence ID" value="CAB12414.2"/>
    <property type="molecule type" value="Genomic_DNA"/>
</dbReference>
<dbReference type="PIR" id="G69786">
    <property type="entry name" value="G69786"/>
</dbReference>
<dbReference type="RefSeq" id="NP_388476.2">
    <property type="nucleotide sequence ID" value="NC_000964.3"/>
</dbReference>
<dbReference type="RefSeq" id="WP_003244150.1">
    <property type="nucleotide sequence ID" value="NZ_OZ025638.1"/>
</dbReference>
<dbReference type="EMDB" id="EMD-0177"/>
<dbReference type="SMR" id="O05519"/>
<dbReference type="FunCoup" id="O05519">
    <property type="interactions" value="632"/>
</dbReference>
<dbReference type="STRING" id="224308.BSU05950"/>
<dbReference type="jPOST" id="O05519"/>
<dbReference type="PaxDb" id="224308-BSU05950"/>
<dbReference type="EnsemblBacteria" id="CAB12414">
    <property type="protein sequence ID" value="CAB12414"/>
    <property type="gene ID" value="BSU_05950"/>
</dbReference>
<dbReference type="GeneID" id="938013"/>
<dbReference type="KEGG" id="bsu:BSU05950"/>
<dbReference type="PATRIC" id="fig|224308.179.peg.640"/>
<dbReference type="eggNOG" id="COG0488">
    <property type="taxonomic scope" value="Bacteria"/>
</dbReference>
<dbReference type="InParanoid" id="O05519"/>
<dbReference type="OrthoDB" id="9760950at2"/>
<dbReference type="PhylomeDB" id="O05519"/>
<dbReference type="BioCyc" id="BSUB:BSU05950-MONOMER"/>
<dbReference type="Proteomes" id="UP000001570">
    <property type="component" value="Chromosome"/>
</dbReference>
<dbReference type="GO" id="GO:0005524">
    <property type="term" value="F:ATP binding"/>
    <property type="evidence" value="ECO:0000318"/>
    <property type="project" value="GO_Central"/>
</dbReference>
<dbReference type="GO" id="GO:0016887">
    <property type="term" value="F:ATP hydrolysis activity"/>
    <property type="evidence" value="ECO:0007669"/>
    <property type="project" value="InterPro"/>
</dbReference>
<dbReference type="GO" id="GO:0003677">
    <property type="term" value="F:DNA binding"/>
    <property type="evidence" value="ECO:0007669"/>
    <property type="project" value="InterPro"/>
</dbReference>
<dbReference type="CDD" id="cd03221">
    <property type="entry name" value="ABCF_EF-3"/>
    <property type="match status" value="2"/>
</dbReference>
<dbReference type="FunFam" id="3.40.50.300:FF:000309">
    <property type="entry name" value="ABC transporter ATP-binding protein"/>
    <property type="match status" value="1"/>
</dbReference>
<dbReference type="FunFam" id="3.40.50.300:FF:000011">
    <property type="entry name" value="Putative ABC transporter ATP-binding component"/>
    <property type="match status" value="1"/>
</dbReference>
<dbReference type="Gene3D" id="3.40.50.300">
    <property type="entry name" value="P-loop containing nucleotide triphosphate hydrolases"/>
    <property type="match status" value="2"/>
</dbReference>
<dbReference type="Gene3D" id="1.10.287.380">
    <property type="entry name" value="Valyl-tRNA synthetase, C-terminal domain"/>
    <property type="match status" value="1"/>
</dbReference>
<dbReference type="InterPro" id="IPR003593">
    <property type="entry name" value="AAA+_ATPase"/>
</dbReference>
<dbReference type="InterPro" id="IPR032524">
    <property type="entry name" value="ABC_tran_C"/>
</dbReference>
<dbReference type="InterPro" id="IPR032781">
    <property type="entry name" value="ABC_tran_Xtn"/>
</dbReference>
<dbReference type="InterPro" id="IPR003439">
    <property type="entry name" value="ABC_transporter-like_ATP-bd"/>
</dbReference>
<dbReference type="InterPro" id="IPR017871">
    <property type="entry name" value="ABC_transporter-like_CS"/>
</dbReference>
<dbReference type="InterPro" id="IPR051309">
    <property type="entry name" value="ABCF_ATPase"/>
</dbReference>
<dbReference type="InterPro" id="IPR027417">
    <property type="entry name" value="P-loop_NTPase"/>
</dbReference>
<dbReference type="InterPro" id="IPR037118">
    <property type="entry name" value="Val-tRNA_synth_C_sf"/>
</dbReference>
<dbReference type="PANTHER" id="PTHR42855">
    <property type="entry name" value="ABC TRANSPORTER ATP-BINDING SUBUNIT"/>
    <property type="match status" value="1"/>
</dbReference>
<dbReference type="PANTHER" id="PTHR42855:SF2">
    <property type="entry name" value="DRUG RESISTANCE ABC TRANSPORTER,ATP-BINDING PROTEIN"/>
    <property type="match status" value="1"/>
</dbReference>
<dbReference type="Pfam" id="PF00005">
    <property type="entry name" value="ABC_tran"/>
    <property type="match status" value="2"/>
</dbReference>
<dbReference type="Pfam" id="PF16326">
    <property type="entry name" value="ABC_tran_CTD"/>
    <property type="match status" value="1"/>
</dbReference>
<dbReference type="Pfam" id="PF12848">
    <property type="entry name" value="ABC_tran_Xtn"/>
    <property type="match status" value="1"/>
</dbReference>
<dbReference type="SMART" id="SM00382">
    <property type="entry name" value="AAA"/>
    <property type="match status" value="2"/>
</dbReference>
<dbReference type="SUPFAM" id="SSF52540">
    <property type="entry name" value="P-loop containing nucleoside triphosphate hydrolases"/>
    <property type="match status" value="2"/>
</dbReference>
<dbReference type="PROSITE" id="PS00211">
    <property type="entry name" value="ABC_TRANSPORTER_1"/>
    <property type="match status" value="2"/>
</dbReference>
<dbReference type="PROSITE" id="PS50893">
    <property type="entry name" value="ABC_TRANSPORTER_2"/>
    <property type="match status" value="2"/>
</dbReference>
<feature type="chain" id="PRO_0000093139" description="Putative ATP-binding protein YdiF">
    <location>
        <begin position="1"/>
        <end position="642"/>
    </location>
</feature>
<feature type="domain" description="ABC transporter 1" evidence="1">
    <location>
        <begin position="4"/>
        <end position="259"/>
    </location>
</feature>
<feature type="domain" description="ABC transporter 2" evidence="1">
    <location>
        <begin position="327"/>
        <end position="541"/>
    </location>
</feature>
<feature type="region of interest" description="Disordered" evidence="2">
    <location>
        <begin position="541"/>
        <end position="567"/>
    </location>
</feature>
<feature type="compositionally biased region" description="Basic and acidic residues" evidence="2">
    <location>
        <begin position="541"/>
        <end position="550"/>
    </location>
</feature>
<feature type="compositionally biased region" description="Basic and acidic residues" evidence="2">
    <location>
        <begin position="557"/>
        <end position="567"/>
    </location>
</feature>
<feature type="binding site" evidence="1">
    <location>
        <begin position="36"/>
        <end position="43"/>
    </location>
    <ligand>
        <name>ATP</name>
        <dbReference type="ChEBI" id="CHEBI:30616"/>
        <label>1</label>
    </ligand>
</feature>
<feature type="binding site" evidence="1">
    <location>
        <begin position="360"/>
        <end position="367"/>
    </location>
    <ligand>
        <name>ATP</name>
        <dbReference type="ChEBI" id="CHEBI:30616"/>
        <label>2</label>
    </ligand>
</feature>
<feature type="sequence conflict" description="In Ref. 1; BAA19719." evidence="4" ref="1">
    <original>V</original>
    <variation>A</variation>
    <location>
        <position position="6"/>
    </location>
</feature>
<organism>
    <name type="scientific">Bacillus subtilis (strain 168)</name>
    <dbReference type="NCBI Taxonomy" id="224308"/>
    <lineage>
        <taxon>Bacteria</taxon>
        <taxon>Bacillati</taxon>
        <taxon>Bacillota</taxon>
        <taxon>Bacilli</taxon>
        <taxon>Bacillales</taxon>
        <taxon>Bacillaceae</taxon>
        <taxon>Bacillus</taxon>
    </lineage>
</organism>
<comment type="similarity">
    <text evidence="3">Belongs to the ABC transporter superfamily. ABCF family. YdiF subfamily.</text>
</comment>
<accession>O05519</accession>
<gene>
    <name type="primary">ydiF</name>
    <name type="ordered locus">BSU05950</name>
</gene>
<keyword id="KW-0067">ATP-binding</keyword>
<keyword id="KW-0547">Nucleotide-binding</keyword>
<keyword id="KW-1185">Reference proteome</keyword>
<keyword id="KW-0677">Repeat</keyword>
<protein>
    <recommendedName>
        <fullName>Putative ATP-binding protein YdiF</fullName>
    </recommendedName>
</protein>
<name>YDIF_BACSU</name>
<reference key="1">
    <citation type="journal article" date="1997" name="Microbiology">
        <title>Nucleotide sequence and analysis of the phoB-rrnE-groESL region of the Bacillus subtilis chromosome.</title>
        <authorList>
            <person name="Sadaie Y."/>
            <person name="Yata K."/>
            <person name="Fujita M."/>
            <person name="Sagai H."/>
            <person name="Itaya M."/>
            <person name="Kasahara Y."/>
            <person name="Ogasawara N."/>
        </authorList>
    </citation>
    <scope>NUCLEOTIDE SEQUENCE [GENOMIC DNA]</scope>
    <source>
        <strain>168 / JH642</strain>
    </source>
</reference>
<reference key="2">
    <citation type="journal article" date="1997" name="Nature">
        <title>The complete genome sequence of the Gram-positive bacterium Bacillus subtilis.</title>
        <authorList>
            <person name="Kunst F."/>
            <person name="Ogasawara N."/>
            <person name="Moszer I."/>
            <person name="Albertini A.M."/>
            <person name="Alloni G."/>
            <person name="Azevedo V."/>
            <person name="Bertero M.G."/>
            <person name="Bessieres P."/>
            <person name="Bolotin A."/>
            <person name="Borchert S."/>
            <person name="Borriss R."/>
            <person name="Boursier L."/>
            <person name="Brans A."/>
            <person name="Braun M."/>
            <person name="Brignell S.C."/>
            <person name="Bron S."/>
            <person name="Brouillet S."/>
            <person name="Bruschi C.V."/>
            <person name="Caldwell B."/>
            <person name="Capuano V."/>
            <person name="Carter N.M."/>
            <person name="Choi S.-K."/>
            <person name="Codani J.-J."/>
            <person name="Connerton I.F."/>
            <person name="Cummings N.J."/>
            <person name="Daniel R.A."/>
            <person name="Denizot F."/>
            <person name="Devine K.M."/>
            <person name="Duesterhoeft A."/>
            <person name="Ehrlich S.D."/>
            <person name="Emmerson P.T."/>
            <person name="Entian K.-D."/>
            <person name="Errington J."/>
            <person name="Fabret C."/>
            <person name="Ferrari E."/>
            <person name="Foulger D."/>
            <person name="Fritz C."/>
            <person name="Fujita M."/>
            <person name="Fujita Y."/>
            <person name="Fuma S."/>
            <person name="Galizzi A."/>
            <person name="Galleron N."/>
            <person name="Ghim S.-Y."/>
            <person name="Glaser P."/>
            <person name="Goffeau A."/>
            <person name="Golightly E.J."/>
            <person name="Grandi G."/>
            <person name="Guiseppi G."/>
            <person name="Guy B.J."/>
            <person name="Haga K."/>
            <person name="Haiech J."/>
            <person name="Harwood C.R."/>
            <person name="Henaut A."/>
            <person name="Hilbert H."/>
            <person name="Holsappel S."/>
            <person name="Hosono S."/>
            <person name="Hullo M.-F."/>
            <person name="Itaya M."/>
            <person name="Jones L.-M."/>
            <person name="Joris B."/>
            <person name="Karamata D."/>
            <person name="Kasahara Y."/>
            <person name="Klaerr-Blanchard M."/>
            <person name="Klein C."/>
            <person name="Kobayashi Y."/>
            <person name="Koetter P."/>
            <person name="Koningstein G."/>
            <person name="Krogh S."/>
            <person name="Kumano M."/>
            <person name="Kurita K."/>
            <person name="Lapidus A."/>
            <person name="Lardinois S."/>
            <person name="Lauber J."/>
            <person name="Lazarevic V."/>
            <person name="Lee S.-M."/>
            <person name="Levine A."/>
            <person name="Liu H."/>
            <person name="Masuda S."/>
            <person name="Mauel C."/>
            <person name="Medigue C."/>
            <person name="Medina N."/>
            <person name="Mellado R.P."/>
            <person name="Mizuno M."/>
            <person name="Moestl D."/>
            <person name="Nakai S."/>
            <person name="Noback M."/>
            <person name="Noone D."/>
            <person name="O'Reilly M."/>
            <person name="Ogawa K."/>
            <person name="Ogiwara A."/>
            <person name="Oudega B."/>
            <person name="Park S.-H."/>
            <person name="Parro V."/>
            <person name="Pohl T.M."/>
            <person name="Portetelle D."/>
            <person name="Porwollik S."/>
            <person name="Prescott A.M."/>
            <person name="Presecan E."/>
            <person name="Pujic P."/>
            <person name="Purnelle B."/>
            <person name="Rapoport G."/>
            <person name="Rey M."/>
            <person name="Reynolds S."/>
            <person name="Rieger M."/>
            <person name="Rivolta C."/>
            <person name="Rocha E."/>
            <person name="Roche B."/>
            <person name="Rose M."/>
            <person name="Sadaie Y."/>
            <person name="Sato T."/>
            <person name="Scanlan E."/>
            <person name="Schleich S."/>
            <person name="Schroeter R."/>
            <person name="Scoffone F."/>
            <person name="Sekiguchi J."/>
            <person name="Sekowska A."/>
            <person name="Seror S.J."/>
            <person name="Serror P."/>
            <person name="Shin B.-S."/>
            <person name="Soldo B."/>
            <person name="Sorokin A."/>
            <person name="Tacconi E."/>
            <person name="Takagi T."/>
            <person name="Takahashi H."/>
            <person name="Takemaru K."/>
            <person name="Takeuchi M."/>
            <person name="Tamakoshi A."/>
            <person name="Tanaka T."/>
            <person name="Terpstra P."/>
            <person name="Tognoni A."/>
            <person name="Tosato V."/>
            <person name="Uchiyama S."/>
            <person name="Vandenbol M."/>
            <person name="Vannier F."/>
            <person name="Vassarotti A."/>
            <person name="Viari A."/>
            <person name="Wambutt R."/>
            <person name="Wedler E."/>
            <person name="Wedler H."/>
            <person name="Weitzenegger T."/>
            <person name="Winters P."/>
            <person name="Wipat A."/>
            <person name="Yamamoto H."/>
            <person name="Yamane K."/>
            <person name="Yasumoto K."/>
            <person name="Yata K."/>
            <person name="Yoshida K."/>
            <person name="Yoshikawa H.-F."/>
            <person name="Zumstein E."/>
            <person name="Yoshikawa H."/>
            <person name="Danchin A."/>
        </authorList>
    </citation>
    <scope>NUCLEOTIDE SEQUENCE [LARGE SCALE GENOMIC DNA]</scope>
    <source>
        <strain>168</strain>
    </source>
</reference>
<reference key="3">
    <citation type="journal article" date="2009" name="Microbiology">
        <title>From a consortium sequence to a unified sequence: the Bacillus subtilis 168 reference genome a decade later.</title>
        <authorList>
            <person name="Barbe V."/>
            <person name="Cruveiller S."/>
            <person name="Kunst F."/>
            <person name="Lenoble P."/>
            <person name="Meurice G."/>
            <person name="Sekowska A."/>
            <person name="Vallenet D."/>
            <person name="Wang T."/>
            <person name="Moszer I."/>
            <person name="Medigue C."/>
            <person name="Danchin A."/>
        </authorList>
    </citation>
    <scope>SEQUENCE REVISION TO 6</scope>
</reference>
<reference key="4">
    <citation type="journal article" date="2019" name="J. Mol. Biol.">
        <title>ABCF ATPases involved in protein synthesis, ribosome assembly and antibiotic resistance: structural and functional diversification across the tree of life.</title>
        <authorList>
            <person name="Murina V."/>
            <person name="Kasari M."/>
            <person name="Takada H."/>
            <person name="Hinnu M."/>
            <person name="Saha C.K."/>
            <person name="Grimshaw J.W."/>
            <person name="Seki T."/>
            <person name="Reith M."/>
            <person name="Putrins M."/>
            <person name="Tenson T."/>
            <person name="Strahl H."/>
            <person name="Hauryliuk V."/>
            <person name="Atkinson G.C."/>
        </authorList>
    </citation>
    <scope>FAMILY</scope>
</reference>